<sequence length="102" mass="10374">MTGSDLIGIMILAAGLFAVGVFGVLARRGMLFQLVALEVALSGPALGFIAAGAYHADPEGQGMFILVLTLAAAEVAVGLALFLRLRRLTGTDDSDAISGLKG</sequence>
<protein>
    <recommendedName>
        <fullName evidence="1">NADH-quinone oxidoreductase subunit K 2</fullName>
        <ecNumber evidence="1">7.1.1.-</ecNumber>
    </recommendedName>
    <alternativeName>
        <fullName evidence="1">NADH dehydrogenase I subunit K 2</fullName>
    </alternativeName>
    <alternativeName>
        <fullName evidence="1">NDH-1 subunit K 2</fullName>
    </alternativeName>
</protein>
<organism>
    <name type="scientific">Rhodopseudomonas palustris (strain ATCC BAA-98 / CGA009)</name>
    <dbReference type="NCBI Taxonomy" id="258594"/>
    <lineage>
        <taxon>Bacteria</taxon>
        <taxon>Pseudomonadati</taxon>
        <taxon>Pseudomonadota</taxon>
        <taxon>Alphaproteobacteria</taxon>
        <taxon>Hyphomicrobiales</taxon>
        <taxon>Nitrobacteraceae</taxon>
        <taxon>Rhodopseudomonas</taxon>
    </lineage>
</organism>
<dbReference type="EC" id="7.1.1.-" evidence="1"/>
<dbReference type="EMBL" id="BX572606">
    <property type="protein sequence ID" value="CAE29696.1"/>
    <property type="molecule type" value="Genomic_DNA"/>
</dbReference>
<dbReference type="SMR" id="Q6N1Z7"/>
<dbReference type="STRING" id="258594.RPA4255"/>
<dbReference type="eggNOG" id="COG0713">
    <property type="taxonomic scope" value="Bacteria"/>
</dbReference>
<dbReference type="HOGENOM" id="CLU_144724_0_1_5"/>
<dbReference type="PhylomeDB" id="Q6N1Z7"/>
<dbReference type="GO" id="GO:0030964">
    <property type="term" value="C:NADH dehydrogenase complex"/>
    <property type="evidence" value="ECO:0007669"/>
    <property type="project" value="TreeGrafter"/>
</dbReference>
<dbReference type="GO" id="GO:0005886">
    <property type="term" value="C:plasma membrane"/>
    <property type="evidence" value="ECO:0007669"/>
    <property type="project" value="UniProtKB-SubCell"/>
</dbReference>
<dbReference type="GO" id="GO:0050136">
    <property type="term" value="F:NADH:ubiquinone reductase (non-electrogenic) activity"/>
    <property type="evidence" value="ECO:0007669"/>
    <property type="project" value="UniProtKB-UniRule"/>
</dbReference>
<dbReference type="GO" id="GO:0048038">
    <property type="term" value="F:quinone binding"/>
    <property type="evidence" value="ECO:0007669"/>
    <property type="project" value="UniProtKB-KW"/>
</dbReference>
<dbReference type="GO" id="GO:0042773">
    <property type="term" value="P:ATP synthesis coupled electron transport"/>
    <property type="evidence" value="ECO:0007669"/>
    <property type="project" value="InterPro"/>
</dbReference>
<dbReference type="Gene3D" id="1.10.287.3510">
    <property type="match status" value="1"/>
</dbReference>
<dbReference type="HAMAP" id="MF_01456">
    <property type="entry name" value="NDH1_NuoK"/>
    <property type="match status" value="1"/>
</dbReference>
<dbReference type="InterPro" id="IPR001133">
    <property type="entry name" value="NADH_UbQ_OxRdtase_chain4L/K"/>
</dbReference>
<dbReference type="InterPro" id="IPR039428">
    <property type="entry name" value="NUOK/Mnh_C1-like"/>
</dbReference>
<dbReference type="NCBIfam" id="NF004320">
    <property type="entry name" value="PRK05715.1-2"/>
    <property type="match status" value="1"/>
</dbReference>
<dbReference type="PANTHER" id="PTHR11434:SF16">
    <property type="entry name" value="NADH-UBIQUINONE OXIDOREDUCTASE CHAIN 4L"/>
    <property type="match status" value="1"/>
</dbReference>
<dbReference type="PANTHER" id="PTHR11434">
    <property type="entry name" value="NADH-UBIQUINONE OXIDOREDUCTASE SUBUNIT ND4L"/>
    <property type="match status" value="1"/>
</dbReference>
<dbReference type="Pfam" id="PF00420">
    <property type="entry name" value="Oxidored_q2"/>
    <property type="match status" value="1"/>
</dbReference>
<evidence type="ECO:0000255" key="1">
    <source>
        <dbReference type="HAMAP-Rule" id="MF_01456"/>
    </source>
</evidence>
<keyword id="KW-0997">Cell inner membrane</keyword>
<keyword id="KW-1003">Cell membrane</keyword>
<keyword id="KW-0472">Membrane</keyword>
<keyword id="KW-0520">NAD</keyword>
<keyword id="KW-0874">Quinone</keyword>
<keyword id="KW-1278">Translocase</keyword>
<keyword id="KW-0812">Transmembrane</keyword>
<keyword id="KW-1133">Transmembrane helix</keyword>
<keyword id="KW-0813">Transport</keyword>
<keyword id="KW-0830">Ubiquinone</keyword>
<proteinExistence type="inferred from homology"/>
<comment type="function">
    <text evidence="1">NDH-1 shuttles electrons from NADH, via FMN and iron-sulfur (Fe-S) centers, to quinones in the respiratory chain. The immediate electron acceptor for the enzyme in this species is believed to be ubiquinone. Couples the redox reaction to proton translocation (for every two electrons transferred, four hydrogen ions are translocated across the cytoplasmic membrane), and thus conserves the redox energy in a proton gradient.</text>
</comment>
<comment type="catalytic activity">
    <reaction evidence="1">
        <text>a quinone + NADH + 5 H(+)(in) = a quinol + NAD(+) + 4 H(+)(out)</text>
        <dbReference type="Rhea" id="RHEA:57888"/>
        <dbReference type="ChEBI" id="CHEBI:15378"/>
        <dbReference type="ChEBI" id="CHEBI:24646"/>
        <dbReference type="ChEBI" id="CHEBI:57540"/>
        <dbReference type="ChEBI" id="CHEBI:57945"/>
        <dbReference type="ChEBI" id="CHEBI:132124"/>
    </reaction>
</comment>
<comment type="subunit">
    <text evidence="1">NDH-1 is composed of 14 different subunits. Subunits NuoA, H, J, K, L, M, N constitute the membrane sector of the complex.</text>
</comment>
<comment type="subcellular location">
    <subcellularLocation>
        <location evidence="1">Cell inner membrane</location>
        <topology evidence="1">Multi-pass membrane protein</topology>
    </subcellularLocation>
</comment>
<comment type="similarity">
    <text evidence="1">Belongs to the complex I subunit 4L family.</text>
</comment>
<reference key="1">
    <citation type="journal article" date="2004" name="Nat. Biotechnol.">
        <title>Complete genome sequence of the metabolically versatile photosynthetic bacterium Rhodopseudomonas palustris.</title>
        <authorList>
            <person name="Larimer F.W."/>
            <person name="Chain P."/>
            <person name="Hauser L."/>
            <person name="Lamerdin J.E."/>
            <person name="Malfatti S."/>
            <person name="Do L."/>
            <person name="Land M.L."/>
            <person name="Pelletier D.A."/>
            <person name="Beatty J.T."/>
            <person name="Lang A.S."/>
            <person name="Tabita F.R."/>
            <person name="Gibson J.L."/>
            <person name="Hanson T.E."/>
            <person name="Bobst C."/>
            <person name="Torres y Torres J.L."/>
            <person name="Peres C."/>
            <person name="Harrison F.H."/>
            <person name="Gibson J."/>
            <person name="Harwood C.S."/>
        </authorList>
    </citation>
    <scope>NUCLEOTIDE SEQUENCE [LARGE SCALE GENOMIC DNA]</scope>
    <source>
        <strain>ATCC BAA-98 / CGA009</strain>
    </source>
</reference>
<gene>
    <name evidence="1" type="primary">nuoK2</name>
    <name type="ordered locus">RPA4255</name>
</gene>
<accession>Q6N1Z7</accession>
<name>NUOK2_RHOPA</name>
<feature type="chain" id="PRO_5000097771" description="NADH-quinone oxidoreductase subunit K 2">
    <location>
        <begin position="1"/>
        <end position="102"/>
    </location>
</feature>
<feature type="transmembrane region" description="Helical" evidence="1">
    <location>
        <begin position="6"/>
        <end position="26"/>
    </location>
</feature>
<feature type="transmembrane region" description="Helical" evidence="1">
    <location>
        <begin position="30"/>
        <end position="50"/>
    </location>
</feature>
<feature type="transmembrane region" description="Helical" evidence="1">
    <location>
        <begin position="63"/>
        <end position="83"/>
    </location>
</feature>